<comment type="catalytic activity">
    <reaction>
        <text>an aldehyde + A + H2O = a carboxylate + AH2 + H(+)</text>
        <dbReference type="Rhea" id="RHEA:56856"/>
        <dbReference type="ChEBI" id="CHEBI:13193"/>
        <dbReference type="ChEBI" id="CHEBI:15377"/>
        <dbReference type="ChEBI" id="CHEBI:15378"/>
        <dbReference type="ChEBI" id="CHEBI:17478"/>
        <dbReference type="ChEBI" id="CHEBI:17499"/>
        <dbReference type="ChEBI" id="CHEBI:29067"/>
        <dbReference type="EC" id="1.2.99.7"/>
    </reaction>
</comment>
<comment type="cofactor">
    <cofactor>
        <name>Mo-molybdopterin cytosine dinucleotide</name>
        <dbReference type="ChEBI" id="CHEBI:71308"/>
    </cofactor>
    <text>Binds 1 Mo-molybdopterin cytosine dinucleotide (Mo-MCD) cofactor per subunit.</text>
</comment>
<comment type="cofactor">
    <cofactor>
        <name>[2Fe-2S] cluster</name>
        <dbReference type="ChEBI" id="CHEBI:190135"/>
    </cofactor>
    <text>Binds 2 [2Fe-2S] clusters per subunit.</text>
</comment>
<comment type="subunit">
    <text>Homodimer.</text>
</comment>
<comment type="similarity">
    <text evidence="3">Belongs to the xanthine dehydrogenase family.</text>
</comment>
<name>MOP_MEGGA</name>
<accession>Q46509</accession>
<protein>
    <recommendedName>
        <fullName>Aldehyde oxidoreductase</fullName>
        <ecNumber>1.2.99.7</ecNumber>
    </recommendedName>
    <alternativeName>
        <fullName>Molybdenum iron sulfur protein</fullName>
    </alternativeName>
</protein>
<reference key="1">
    <citation type="journal article" date="1994" name="Eur. J. Biochem.">
        <title>Molecular cloning and sequence analysis of the gene of the molybdenum-containing aldehyde oxido-reductase of Desulfovibrio gigas. The deduced amino acid sequence shows similarity to xanthine dehydrogenase.</title>
        <authorList>
            <person name="Thoenes U."/>
            <person name="Flores O.L."/>
            <person name="Neves A."/>
            <person name="Devreese B."/>
            <person name="van Beeumen J.J."/>
            <person name="Huber R."/>
            <person name="Romao M.J."/>
            <person name="Legall J."/>
            <person name="Moura J.J.G."/>
            <person name="Rodriges-Pousada C."/>
        </authorList>
    </citation>
    <scope>NUCLEOTIDE SEQUENCE [GENOMIC DNA]</scope>
</reference>
<reference key="2">
    <citation type="journal article" date="1995" name="Science">
        <title>Crystal structure of the xanthine oxidase-related aldehyde oxido-reductase from D. gigas.</title>
        <authorList>
            <person name="Romao M.J."/>
            <person name="Archer M."/>
            <person name="Moura I."/>
            <person name="Moura J.J.G."/>
            <person name="LeGall J."/>
            <person name="Engh R."/>
            <person name="Schneider M."/>
            <person name="Hof P."/>
            <person name="Huber R."/>
        </authorList>
    </citation>
    <scope>X-RAY CRYSTALLOGRAPHY (2.25 ANGSTROMS)</scope>
</reference>
<reference key="3">
    <citation type="journal article" date="1996" name="Proc. Natl. Acad. Sci. U.S.A.">
        <title>A structure-based catalytic mechanism for the xanthine oxidase family of molybdenum enzymes.</title>
        <authorList>
            <person name="Huber R."/>
            <person name="Hof P."/>
            <person name="Duarte R.O."/>
            <person name="Moura J.J.G."/>
            <person name="Moura I."/>
            <person name="Liu M.-Y."/>
            <person name="LeGall J."/>
            <person name="Hille R."/>
            <person name="Archer M."/>
            <person name="Romao M.J."/>
        </authorList>
    </citation>
    <scope>X-RAY CRYSTALLOGRAPHY (1.8 ANGSTROMS)</scope>
</reference>
<reference key="4">
    <citation type="journal article" date="2001" name="J. Biol. Inorg. Chem.">
        <title>Structure refinement of the aldehyde oxidoreductase from Desulfovibrio gigas (MOP) at 1.28 A.</title>
        <authorList>
            <person name="Rebelo J.M."/>
            <person name="Dias J.M."/>
            <person name="Huber R."/>
            <person name="Moura J.J."/>
            <person name="Romao M.J."/>
        </authorList>
    </citation>
    <scope>X-RAY CRYSTALLOGRAPHY (1.28 ANGSTROMS)</scope>
</reference>
<proteinExistence type="evidence at protein level"/>
<dbReference type="EC" id="1.2.99.7"/>
<dbReference type="EMBL" id="X77222">
    <property type="protein sequence ID" value="CAA54439.1"/>
    <property type="molecule type" value="Genomic_DNA"/>
</dbReference>
<dbReference type="PIR" id="A57429">
    <property type="entry name" value="A57429"/>
</dbReference>
<dbReference type="PDB" id="1SIJ">
    <property type="method" value="X-ray"/>
    <property type="resolution" value="2.30 A"/>
    <property type="chains" value="A=1-907"/>
</dbReference>
<dbReference type="PDB" id="1VLB">
    <property type="method" value="X-ray"/>
    <property type="resolution" value="1.28 A"/>
    <property type="chains" value="A=1-907"/>
</dbReference>
<dbReference type="PDB" id="3FAH">
    <property type="method" value="X-ray"/>
    <property type="resolution" value="1.72 A"/>
    <property type="chains" value="A=1-907"/>
</dbReference>
<dbReference type="PDB" id="3FC4">
    <property type="method" value="X-ray"/>
    <property type="resolution" value="1.79 A"/>
    <property type="chains" value="A=1-907"/>
</dbReference>
<dbReference type="PDB" id="3L4P">
    <property type="method" value="X-ray"/>
    <property type="resolution" value="1.45 A"/>
    <property type="chains" value="A=1-907"/>
</dbReference>
<dbReference type="PDB" id="4C7Y">
    <property type="method" value="X-ray"/>
    <property type="resolution" value="1.57 A"/>
    <property type="chains" value="A=1-907"/>
</dbReference>
<dbReference type="PDB" id="4C7Z">
    <property type="method" value="X-ray"/>
    <property type="resolution" value="1.55 A"/>
    <property type="chains" value="A=1-907"/>
</dbReference>
<dbReference type="PDB" id="4C80">
    <property type="method" value="X-ray"/>
    <property type="resolution" value="1.50 A"/>
    <property type="chains" value="A=1-907"/>
</dbReference>
<dbReference type="PDB" id="4US8">
    <property type="method" value="X-ray"/>
    <property type="resolution" value="1.49 A"/>
    <property type="chains" value="A=1-907"/>
</dbReference>
<dbReference type="PDB" id="4US9">
    <property type="method" value="X-ray"/>
    <property type="resolution" value="1.40 A"/>
    <property type="chains" value="A=1-907"/>
</dbReference>
<dbReference type="PDB" id="4USA">
    <property type="method" value="X-ray"/>
    <property type="resolution" value="1.13 A"/>
    <property type="chains" value="A=1-907"/>
</dbReference>
<dbReference type="PDBsum" id="1SIJ"/>
<dbReference type="PDBsum" id="1VLB"/>
<dbReference type="PDBsum" id="3FAH"/>
<dbReference type="PDBsum" id="3FC4"/>
<dbReference type="PDBsum" id="3L4P"/>
<dbReference type="PDBsum" id="4C7Y"/>
<dbReference type="PDBsum" id="4C7Z"/>
<dbReference type="PDBsum" id="4C80"/>
<dbReference type="PDBsum" id="4US8"/>
<dbReference type="PDBsum" id="4US9"/>
<dbReference type="PDBsum" id="4USA"/>
<dbReference type="SMR" id="Q46509"/>
<dbReference type="DrugBank" id="DB02137">
    <property type="generic name" value="Molybdenum cofactor"/>
</dbReference>
<dbReference type="OMA" id="SWMRAPG"/>
<dbReference type="BRENDA" id="1.2.99.7">
    <property type="organism ID" value="1907"/>
</dbReference>
<dbReference type="SABIO-RK" id="Q46509"/>
<dbReference type="EvolutionaryTrace" id="Q46509"/>
<dbReference type="GO" id="GO:0051537">
    <property type="term" value="F:2 iron, 2 sulfur cluster binding"/>
    <property type="evidence" value="ECO:0007669"/>
    <property type="project" value="UniProtKB-KW"/>
</dbReference>
<dbReference type="GO" id="GO:0033727">
    <property type="term" value="F:aldehyde dehydrogenase (FAD-independent) activity"/>
    <property type="evidence" value="ECO:0007669"/>
    <property type="project" value="UniProtKB-EC"/>
</dbReference>
<dbReference type="GO" id="GO:0005506">
    <property type="term" value="F:iron ion binding"/>
    <property type="evidence" value="ECO:0007669"/>
    <property type="project" value="InterPro"/>
</dbReference>
<dbReference type="CDD" id="cd00207">
    <property type="entry name" value="fer2"/>
    <property type="match status" value="1"/>
</dbReference>
<dbReference type="Gene3D" id="3.10.20.30">
    <property type="match status" value="1"/>
</dbReference>
<dbReference type="Gene3D" id="1.10.150.120">
    <property type="entry name" value="[2Fe-2S]-binding domain"/>
    <property type="match status" value="1"/>
</dbReference>
<dbReference type="Gene3D" id="3.90.1170.50">
    <property type="entry name" value="Aldehyde oxidase/xanthine dehydrogenase, a/b hammerhead"/>
    <property type="match status" value="1"/>
</dbReference>
<dbReference type="Gene3D" id="3.30.365.10">
    <property type="entry name" value="Aldehyde oxidase/xanthine dehydrogenase, molybdopterin binding domain"/>
    <property type="match status" value="4"/>
</dbReference>
<dbReference type="InterPro" id="IPR002888">
    <property type="entry name" value="2Fe-2S-bd"/>
</dbReference>
<dbReference type="InterPro" id="IPR036884">
    <property type="entry name" value="2Fe-2S-bd_dom_sf"/>
</dbReference>
<dbReference type="InterPro" id="IPR036010">
    <property type="entry name" value="2Fe-2S_ferredoxin-like_sf"/>
</dbReference>
<dbReference type="InterPro" id="IPR001041">
    <property type="entry name" value="2Fe-2S_ferredoxin-type"/>
</dbReference>
<dbReference type="InterPro" id="IPR006058">
    <property type="entry name" value="2Fe2S_fd_BS"/>
</dbReference>
<dbReference type="InterPro" id="IPR000674">
    <property type="entry name" value="Ald_Oxase/Xan_DH_a/b"/>
</dbReference>
<dbReference type="InterPro" id="IPR036856">
    <property type="entry name" value="Ald_Oxase/Xan_DH_a/b_sf"/>
</dbReference>
<dbReference type="InterPro" id="IPR016208">
    <property type="entry name" value="Ald_Oxase/xanthine_DH-like"/>
</dbReference>
<dbReference type="InterPro" id="IPR008274">
    <property type="entry name" value="AldOxase/xan_DH_MoCoBD1"/>
</dbReference>
<dbReference type="InterPro" id="IPR046867">
    <property type="entry name" value="AldOxase/xan_DH_MoCoBD2"/>
</dbReference>
<dbReference type="InterPro" id="IPR037165">
    <property type="entry name" value="AldOxase/xan_DH_Mopterin-bd_sf"/>
</dbReference>
<dbReference type="InterPro" id="IPR012675">
    <property type="entry name" value="Beta-grasp_dom_sf"/>
</dbReference>
<dbReference type="InterPro" id="IPR054705">
    <property type="entry name" value="Mop"/>
</dbReference>
<dbReference type="NCBIfam" id="NF045668">
    <property type="entry name" value="pterin_aldehy"/>
    <property type="match status" value="1"/>
</dbReference>
<dbReference type="PANTHER" id="PTHR11908">
    <property type="entry name" value="XANTHINE DEHYDROGENASE"/>
    <property type="match status" value="1"/>
</dbReference>
<dbReference type="PANTHER" id="PTHR11908:SF157">
    <property type="entry name" value="XANTHINE DEHYDROGENASE SUBUNIT D-RELATED"/>
    <property type="match status" value="1"/>
</dbReference>
<dbReference type="Pfam" id="PF01315">
    <property type="entry name" value="Ald_Xan_dh_C"/>
    <property type="match status" value="1"/>
</dbReference>
<dbReference type="Pfam" id="PF00111">
    <property type="entry name" value="Fer2"/>
    <property type="match status" value="1"/>
</dbReference>
<dbReference type="Pfam" id="PF01799">
    <property type="entry name" value="Fer2_2"/>
    <property type="match status" value="1"/>
</dbReference>
<dbReference type="Pfam" id="PF02738">
    <property type="entry name" value="MoCoBD_1"/>
    <property type="match status" value="1"/>
</dbReference>
<dbReference type="Pfam" id="PF20256">
    <property type="entry name" value="MoCoBD_2"/>
    <property type="match status" value="1"/>
</dbReference>
<dbReference type="SMART" id="SM01008">
    <property type="entry name" value="Ald_Xan_dh_C"/>
    <property type="match status" value="1"/>
</dbReference>
<dbReference type="SUPFAM" id="SSF54292">
    <property type="entry name" value="2Fe-2S ferredoxin-like"/>
    <property type="match status" value="1"/>
</dbReference>
<dbReference type="SUPFAM" id="SSF47741">
    <property type="entry name" value="CO dehydrogenase ISP C-domain like"/>
    <property type="match status" value="1"/>
</dbReference>
<dbReference type="SUPFAM" id="SSF54665">
    <property type="entry name" value="CO dehydrogenase molybdoprotein N-domain-like"/>
    <property type="match status" value="1"/>
</dbReference>
<dbReference type="SUPFAM" id="SSF56003">
    <property type="entry name" value="Molybdenum cofactor-binding domain"/>
    <property type="match status" value="1"/>
</dbReference>
<dbReference type="PROSITE" id="PS00197">
    <property type="entry name" value="2FE2S_FER_1"/>
    <property type="match status" value="1"/>
</dbReference>
<dbReference type="PROSITE" id="PS51085">
    <property type="entry name" value="2FE2S_FER_2"/>
    <property type="match status" value="1"/>
</dbReference>
<organism>
    <name type="scientific">Megalodesulfovibrio gigas</name>
    <name type="common">Desulfovibrio gigas</name>
    <dbReference type="NCBI Taxonomy" id="879"/>
    <lineage>
        <taxon>Bacteria</taxon>
        <taxon>Pseudomonadati</taxon>
        <taxon>Thermodesulfobacteriota</taxon>
        <taxon>Desulfovibrionia</taxon>
        <taxon>Desulfovibrionales</taxon>
        <taxon>Desulfovibrionaceae</taxon>
        <taxon>Megalodesulfovibrio</taxon>
    </lineage>
</organism>
<sequence length="907" mass="97035">MIQKVITVNGIEQNLFVDAEALLSDVLRQQLGLTGVKVGCEQGQCGACSVILDGKVVRACVTKMKRVADGAQITTIEGVGQPENLHPLQKAWVLHGGAQCGFCSPGFIVSAKGLLDTNADPSREDVRDWFQKHRNACRCTGYKPLVDAVMDAAAVINGKKPETDLEFKMPADGRIWGSKYPRPTAVAKVTGTLDYGADLGLKMPAGTLHLAMVQAKVSHANIKGIDTSEALTMPGVHSVITHKDVKGKNRITGLITFPTNKGDGWDRPILCDEKVFQYGDCIALVCADSEANARAAAEKVKVDLEELPAYMSGPAAAAEDAIEIHPGTPNVYFEQPIVKGEDTGPIFASADVTVEGDFYVGRQPHMPIEPDVAFAYMGDDGKCYIHSKSIGVHLHLYMIAPGVGLEPDQLVLVANPMGGTFGYKFSPTSEALVAVAAMATGRPVHLRYNYQQQQQYTGKRSPWEMNVKFAAKKDGTLLAMESDWLVDHGPYSEFGDLLTLRGAQFIGAGYNIPNIRGLGRTVATNHVWGSAFRGYGAPQSMFASECLMDMLAEKLGMDPLELRYKNAYRPGDTNPTGQEPEVFSLPDMIDQLRPKYQAALEKAQKESTATHKKGVGISIGVYGSGLDGPDASEAWAELNADGTITVHTAWEDHGQGADIGCVGTAHEALRPMGVAPEKIKFTWPNTATTPNSGPSGGSRQQVMTGNAIRVACENLLKACEKPGGGYYTYDELKAADKPTKITGNWTASGATHCDAVTGLGKPFVVYMYGVFMAEVTVDVATGQTTVDGMTLMADLGSLCNQLATDGQIYGGLAQGIGLALSEDFEDIKKHATLVGAGFPFIKQIPDKLDIVYVNHPRPDGPFGASGVGELPLTSPHAAIINAIKSATGVRIYRLPAYPEKVLEALKA</sequence>
<feature type="chain" id="PRO_0000166102" description="Aldehyde oxidoreductase">
    <location>
        <begin position="1"/>
        <end position="907"/>
    </location>
</feature>
<feature type="domain" description="2Fe-2S ferredoxin-type" evidence="1">
    <location>
        <begin position="2"/>
        <end position="79"/>
    </location>
</feature>
<feature type="binding site" evidence="2">
    <location>
        <position position="40"/>
    </location>
    <ligand>
        <name>[2Fe-2S] cluster</name>
        <dbReference type="ChEBI" id="CHEBI:190135"/>
        <label>1</label>
    </ligand>
</feature>
<feature type="binding site" evidence="2">
    <location>
        <position position="45"/>
    </location>
    <ligand>
        <name>[2Fe-2S] cluster</name>
        <dbReference type="ChEBI" id="CHEBI:190135"/>
        <label>1</label>
    </ligand>
</feature>
<feature type="binding site" evidence="2">
    <location>
        <position position="48"/>
    </location>
    <ligand>
        <name>[2Fe-2S] cluster</name>
        <dbReference type="ChEBI" id="CHEBI:190135"/>
        <label>1</label>
    </ligand>
</feature>
<feature type="binding site" evidence="2">
    <location>
        <position position="60"/>
    </location>
    <ligand>
        <name>[2Fe-2S] cluster</name>
        <dbReference type="ChEBI" id="CHEBI:190135"/>
        <label>1</label>
    </ligand>
</feature>
<feature type="binding site" evidence="2">
    <location>
        <position position="100"/>
    </location>
    <ligand>
        <name>[2Fe-2S] cluster</name>
        <dbReference type="ChEBI" id="CHEBI:190135"/>
        <label>2</label>
    </ligand>
</feature>
<feature type="binding site" evidence="2">
    <location>
        <position position="103"/>
    </location>
    <ligand>
        <name>[2Fe-2S] cluster</name>
        <dbReference type="ChEBI" id="CHEBI:190135"/>
        <label>2</label>
    </ligand>
</feature>
<feature type="binding site" evidence="2">
    <location>
        <position position="137"/>
    </location>
    <ligand>
        <name>[2Fe-2S] cluster</name>
        <dbReference type="ChEBI" id="CHEBI:190135"/>
        <label>2</label>
    </ligand>
</feature>
<feature type="binding site" evidence="2">
    <location>
        <position position="139"/>
    </location>
    <ligand>
        <name>[2Fe-2S] cluster</name>
        <dbReference type="ChEBI" id="CHEBI:190135"/>
        <label>2</label>
    </ligand>
</feature>
<feature type="binding site">
    <location>
        <position position="653"/>
    </location>
    <ligand>
        <name>Mo-molybdopterin cytosine dinucleotide</name>
        <dbReference type="ChEBI" id="CHEBI:71308"/>
    </ligand>
    <ligandPart>
        <name>Mo</name>
        <dbReference type="ChEBI" id="CHEBI:28685"/>
    </ligandPart>
</feature>
<feature type="binding site">
    <location>
        <position position="869"/>
    </location>
    <ligand>
        <name>Mo-molybdopterin cytosine dinucleotide</name>
        <dbReference type="ChEBI" id="CHEBI:71308"/>
    </ligand>
    <ligandPart>
        <name>Mo</name>
        <dbReference type="ChEBI" id="CHEBI:28685"/>
    </ligandPart>
</feature>
<feature type="strand" evidence="5">
    <location>
        <begin position="2"/>
        <end position="8"/>
    </location>
</feature>
<feature type="strand" evidence="5">
    <location>
        <begin position="11"/>
        <end position="17"/>
    </location>
</feature>
<feature type="helix" evidence="5">
    <location>
        <begin position="23"/>
        <end position="29"/>
    </location>
</feature>
<feature type="strand" evidence="5">
    <location>
        <begin position="39"/>
        <end position="45"/>
    </location>
</feature>
<feature type="strand" evidence="5">
    <location>
        <begin position="49"/>
        <end position="52"/>
    </location>
</feature>
<feature type="strand" evidence="5">
    <location>
        <begin position="55"/>
        <end position="58"/>
    </location>
</feature>
<feature type="helix" evidence="5">
    <location>
        <begin position="59"/>
        <end position="61"/>
    </location>
</feature>
<feature type="helix" evidence="5">
    <location>
        <begin position="64"/>
        <end position="66"/>
    </location>
</feature>
<feature type="strand" evidence="5">
    <location>
        <begin position="72"/>
        <end position="74"/>
    </location>
</feature>
<feature type="helix" evidence="5">
    <location>
        <begin position="76"/>
        <end position="79"/>
    </location>
</feature>
<feature type="helix" evidence="5">
    <location>
        <begin position="87"/>
        <end position="95"/>
    </location>
</feature>
<feature type="helix" evidence="5">
    <location>
        <begin position="104"/>
        <end position="117"/>
    </location>
</feature>
<feature type="helix" evidence="5">
    <location>
        <begin position="123"/>
        <end position="132"/>
    </location>
</feature>
<feature type="strand" evidence="5">
    <location>
        <begin position="138"/>
        <end position="140"/>
    </location>
</feature>
<feature type="helix" evidence="5">
    <location>
        <begin position="143"/>
        <end position="156"/>
    </location>
</feature>
<feature type="helix" evidence="5">
    <location>
        <begin position="162"/>
        <end position="165"/>
    </location>
</feature>
<feature type="helix" evidence="5">
    <location>
        <begin position="185"/>
        <end position="189"/>
    </location>
</feature>
<feature type="helix" evidence="5">
    <location>
        <begin position="196"/>
        <end position="201"/>
    </location>
</feature>
<feature type="strand" evidence="5">
    <location>
        <begin position="208"/>
        <end position="214"/>
    </location>
</feature>
<feature type="strand" evidence="5">
    <location>
        <begin position="216"/>
        <end position="226"/>
    </location>
</feature>
<feature type="helix" evidence="5">
    <location>
        <begin position="228"/>
        <end position="231"/>
    </location>
</feature>
<feature type="strand" evidence="5">
    <location>
        <begin position="236"/>
        <end position="240"/>
    </location>
</feature>
<feature type="helix" evidence="5">
    <location>
        <begin position="242"/>
        <end position="244"/>
    </location>
</feature>
<feature type="strand" evidence="5">
    <location>
        <begin position="249"/>
        <end position="251"/>
    </location>
</feature>
<feature type="strand" evidence="5">
    <location>
        <begin position="267"/>
        <end position="270"/>
    </location>
</feature>
<feature type="strand" evidence="5">
    <location>
        <begin position="272"/>
        <end position="275"/>
    </location>
</feature>
<feature type="strand" evidence="5">
    <location>
        <begin position="281"/>
        <end position="289"/>
    </location>
</feature>
<feature type="helix" evidence="5">
    <location>
        <begin position="290"/>
        <end position="297"/>
    </location>
</feature>
<feature type="strand" evidence="5">
    <location>
        <begin position="301"/>
        <end position="306"/>
    </location>
</feature>
<feature type="helix" evidence="5">
    <location>
        <begin position="313"/>
        <end position="317"/>
    </location>
</feature>
<feature type="strand" evidence="5">
    <location>
        <begin position="330"/>
        <end position="341"/>
    </location>
</feature>
<feature type="helix" evidence="5">
    <location>
        <begin position="343"/>
        <end position="349"/>
    </location>
</feature>
<feature type="strand" evidence="5">
    <location>
        <begin position="351"/>
        <end position="360"/>
    </location>
</feature>
<feature type="strand" evidence="5">
    <location>
        <begin position="372"/>
        <end position="377"/>
    </location>
</feature>
<feature type="strand" evidence="5">
    <location>
        <begin position="383"/>
        <end position="387"/>
    </location>
</feature>
<feature type="helix" evidence="5">
    <location>
        <begin position="392"/>
        <end position="403"/>
    </location>
</feature>
<feature type="helix" evidence="5">
    <location>
        <begin position="407"/>
        <end position="409"/>
    </location>
</feature>
<feature type="strand" evidence="5">
    <location>
        <begin position="410"/>
        <end position="414"/>
    </location>
</feature>
<feature type="helix" evidence="5">
    <location>
        <begin position="423"/>
        <end position="425"/>
    </location>
</feature>
<feature type="helix" evidence="5">
    <location>
        <begin position="430"/>
        <end position="440"/>
    </location>
</feature>
<feature type="strand" evidence="5">
    <location>
        <begin position="444"/>
        <end position="447"/>
    </location>
</feature>
<feature type="helix" evidence="5">
    <location>
        <begin position="450"/>
        <end position="455"/>
    </location>
</feature>
<feature type="strand" evidence="5">
    <location>
        <begin position="463"/>
        <end position="471"/>
    </location>
</feature>
<feature type="strand" evidence="5">
    <location>
        <begin position="477"/>
        <end position="487"/>
    </location>
</feature>
<feature type="helix" evidence="5">
    <location>
        <begin position="495"/>
        <end position="505"/>
    </location>
</feature>
<feature type="turn" evidence="5">
    <location>
        <begin position="506"/>
        <end position="509"/>
    </location>
</feature>
<feature type="strand" evidence="5">
    <location>
        <begin position="514"/>
        <end position="522"/>
    </location>
</feature>
<feature type="turn" evidence="5">
    <location>
        <begin position="533"/>
        <end position="536"/>
    </location>
</feature>
<feature type="helix" evidence="5">
    <location>
        <begin position="537"/>
        <end position="555"/>
    </location>
</feature>
<feature type="helix" evidence="5">
    <location>
        <begin position="559"/>
        <end position="566"/>
    </location>
</feature>
<feature type="helix" evidence="5">
    <location>
        <begin position="585"/>
        <end position="606"/>
    </location>
</feature>
<feature type="strand" evidence="5">
    <location>
        <begin position="609"/>
        <end position="626"/>
    </location>
</feature>
<feature type="turn" evidence="5">
    <location>
        <begin position="627"/>
        <end position="629"/>
    </location>
</feature>
<feature type="strand" evidence="5">
    <location>
        <begin position="631"/>
        <end position="638"/>
    </location>
</feature>
<feature type="strand" evidence="5">
    <location>
        <begin position="644"/>
        <end position="647"/>
    </location>
</feature>
<feature type="strand" evidence="5">
    <location>
        <begin position="653"/>
        <end position="655"/>
    </location>
</feature>
<feature type="helix" evidence="5">
    <location>
        <begin position="657"/>
        <end position="669"/>
    </location>
</feature>
<feature type="helix" evidence="5">
    <location>
        <begin position="670"/>
        <end position="672"/>
    </location>
</feature>
<feature type="helix" evidence="5">
    <location>
        <begin position="676"/>
        <end position="678"/>
    </location>
</feature>
<feature type="strand" evidence="5">
    <location>
        <begin position="679"/>
        <end position="681"/>
    </location>
</feature>
<feature type="turn" evidence="5">
    <location>
        <begin position="686"/>
        <end position="688"/>
    </location>
</feature>
<feature type="helix" evidence="5">
    <location>
        <begin position="700"/>
        <end position="719"/>
    </location>
</feature>
<feature type="strand" evidence="5">
    <location>
        <begin position="724"/>
        <end position="726"/>
    </location>
</feature>
<feature type="helix" evidence="5">
    <location>
        <begin position="729"/>
        <end position="734"/>
    </location>
</feature>
<feature type="strand" evidence="5">
    <location>
        <begin position="740"/>
        <end position="746"/>
    </location>
</feature>
<feature type="turn" evidence="5">
    <location>
        <begin position="755"/>
        <end position="757"/>
    </location>
</feature>
<feature type="strand" evidence="5">
    <location>
        <begin position="766"/>
        <end position="778"/>
    </location>
</feature>
<feature type="turn" evidence="5">
    <location>
        <begin position="779"/>
        <end position="781"/>
    </location>
</feature>
<feature type="strand" evidence="5">
    <location>
        <begin position="784"/>
        <end position="794"/>
    </location>
</feature>
<feature type="helix" evidence="5">
    <location>
        <begin position="801"/>
        <end position="820"/>
    </location>
</feature>
<feature type="helix" evidence="5">
    <location>
        <begin position="829"/>
        <end position="831"/>
    </location>
</feature>
<feature type="turn" evidence="5">
    <location>
        <begin position="833"/>
        <end position="837"/>
    </location>
</feature>
<feature type="helix" evidence="5">
    <location>
        <begin position="841"/>
        <end position="843"/>
    </location>
</feature>
<feature type="strand" evidence="5">
    <location>
        <begin position="848"/>
        <end position="852"/>
    </location>
</feature>
<feature type="strand" evidence="4">
    <location>
        <begin position="858"/>
        <end position="860"/>
    </location>
</feature>
<feature type="helix" evidence="5">
    <location>
        <begin position="861"/>
        <end position="863"/>
    </location>
</feature>
<feature type="helix" evidence="5">
    <location>
        <begin position="870"/>
        <end position="872"/>
    </location>
</feature>
<feature type="helix" evidence="5">
    <location>
        <begin position="875"/>
        <end position="887"/>
    </location>
</feature>
<feature type="strand" evidence="4">
    <location>
        <begin position="893"/>
        <end position="895"/>
    </location>
</feature>
<feature type="helix" evidence="5">
    <location>
        <begin position="898"/>
        <end position="906"/>
    </location>
</feature>
<evidence type="ECO:0000255" key="1">
    <source>
        <dbReference type="PROSITE-ProRule" id="PRU00465"/>
    </source>
</evidence>
<evidence type="ECO:0000269" key="2">
    <source>
    </source>
</evidence>
<evidence type="ECO:0000305" key="3"/>
<evidence type="ECO:0007829" key="4">
    <source>
        <dbReference type="PDB" id="1SIJ"/>
    </source>
</evidence>
<evidence type="ECO:0007829" key="5">
    <source>
        <dbReference type="PDB" id="4USA"/>
    </source>
</evidence>
<gene>
    <name type="primary">mop</name>
</gene>
<keyword id="KW-0001">2Fe-2S</keyword>
<keyword id="KW-0002">3D-structure</keyword>
<keyword id="KW-0274">FAD</keyword>
<keyword id="KW-0285">Flavoprotein</keyword>
<keyword id="KW-0408">Iron</keyword>
<keyword id="KW-0411">Iron-sulfur</keyword>
<keyword id="KW-0479">Metal-binding</keyword>
<keyword id="KW-0500">Molybdenum</keyword>
<keyword id="KW-0520">NAD</keyword>
<keyword id="KW-0560">Oxidoreductase</keyword>